<gene>
    <name evidence="1" type="primary">rplS</name>
    <name type="ordered locus">CAB626</name>
</gene>
<evidence type="ECO:0000255" key="1">
    <source>
        <dbReference type="HAMAP-Rule" id="MF_00402"/>
    </source>
</evidence>
<evidence type="ECO:0000305" key="2"/>
<protein>
    <recommendedName>
        <fullName evidence="1">Large ribosomal subunit protein bL19</fullName>
    </recommendedName>
    <alternativeName>
        <fullName evidence="2">50S ribosomal protein L19</fullName>
    </alternativeName>
</protein>
<name>RL19_CHLAB</name>
<accession>Q5L5L9</accession>
<dbReference type="EMBL" id="CR848038">
    <property type="protein sequence ID" value="CAH64072.1"/>
    <property type="molecule type" value="Genomic_DNA"/>
</dbReference>
<dbReference type="RefSeq" id="WP_006344242.1">
    <property type="nucleotide sequence ID" value="NC_004552.2"/>
</dbReference>
<dbReference type="SMR" id="Q5L5L9"/>
<dbReference type="GeneID" id="93024173"/>
<dbReference type="KEGG" id="cab:CAB626"/>
<dbReference type="eggNOG" id="COG0335">
    <property type="taxonomic scope" value="Bacteria"/>
</dbReference>
<dbReference type="HOGENOM" id="CLU_103507_2_1_0"/>
<dbReference type="OrthoDB" id="9803541at2"/>
<dbReference type="Proteomes" id="UP000001012">
    <property type="component" value="Chromosome"/>
</dbReference>
<dbReference type="GO" id="GO:0022625">
    <property type="term" value="C:cytosolic large ribosomal subunit"/>
    <property type="evidence" value="ECO:0007669"/>
    <property type="project" value="TreeGrafter"/>
</dbReference>
<dbReference type="GO" id="GO:0003735">
    <property type="term" value="F:structural constituent of ribosome"/>
    <property type="evidence" value="ECO:0007669"/>
    <property type="project" value="InterPro"/>
</dbReference>
<dbReference type="GO" id="GO:0006412">
    <property type="term" value="P:translation"/>
    <property type="evidence" value="ECO:0007669"/>
    <property type="project" value="UniProtKB-UniRule"/>
</dbReference>
<dbReference type="Gene3D" id="2.30.30.790">
    <property type="match status" value="1"/>
</dbReference>
<dbReference type="HAMAP" id="MF_00402">
    <property type="entry name" value="Ribosomal_bL19"/>
    <property type="match status" value="1"/>
</dbReference>
<dbReference type="InterPro" id="IPR001857">
    <property type="entry name" value="Ribosomal_bL19"/>
</dbReference>
<dbReference type="InterPro" id="IPR018257">
    <property type="entry name" value="Ribosomal_bL19_CS"/>
</dbReference>
<dbReference type="InterPro" id="IPR038657">
    <property type="entry name" value="Ribosomal_bL19_sf"/>
</dbReference>
<dbReference type="InterPro" id="IPR008991">
    <property type="entry name" value="Translation_prot_SH3-like_sf"/>
</dbReference>
<dbReference type="NCBIfam" id="TIGR01024">
    <property type="entry name" value="rplS_bact"/>
    <property type="match status" value="1"/>
</dbReference>
<dbReference type="PANTHER" id="PTHR15680:SF9">
    <property type="entry name" value="LARGE RIBOSOMAL SUBUNIT PROTEIN BL19M"/>
    <property type="match status" value="1"/>
</dbReference>
<dbReference type="PANTHER" id="PTHR15680">
    <property type="entry name" value="RIBOSOMAL PROTEIN L19"/>
    <property type="match status" value="1"/>
</dbReference>
<dbReference type="Pfam" id="PF01245">
    <property type="entry name" value="Ribosomal_L19"/>
    <property type="match status" value="1"/>
</dbReference>
<dbReference type="PIRSF" id="PIRSF002191">
    <property type="entry name" value="Ribosomal_L19"/>
    <property type="match status" value="1"/>
</dbReference>
<dbReference type="PRINTS" id="PR00061">
    <property type="entry name" value="RIBOSOMALL19"/>
</dbReference>
<dbReference type="SUPFAM" id="SSF50104">
    <property type="entry name" value="Translation proteins SH3-like domain"/>
    <property type="match status" value="1"/>
</dbReference>
<dbReference type="PROSITE" id="PS01015">
    <property type="entry name" value="RIBOSOMAL_L19"/>
    <property type="match status" value="1"/>
</dbReference>
<organism>
    <name type="scientific">Chlamydia abortus (strain DSM 27085 / S26/3)</name>
    <name type="common">Chlamydophila abortus</name>
    <dbReference type="NCBI Taxonomy" id="218497"/>
    <lineage>
        <taxon>Bacteria</taxon>
        <taxon>Pseudomonadati</taxon>
        <taxon>Chlamydiota</taxon>
        <taxon>Chlamydiia</taxon>
        <taxon>Chlamydiales</taxon>
        <taxon>Chlamydiaceae</taxon>
        <taxon>Chlamydia/Chlamydophila group</taxon>
        <taxon>Chlamydia</taxon>
    </lineage>
</organism>
<proteinExistence type="inferred from homology"/>
<reference key="1">
    <citation type="journal article" date="2005" name="Genome Res.">
        <title>The Chlamydophila abortus genome sequence reveals an array of variable proteins that contribute to interspecies variation.</title>
        <authorList>
            <person name="Thomson N.R."/>
            <person name="Yeats C."/>
            <person name="Bell K."/>
            <person name="Holden M.T.G."/>
            <person name="Bentley S.D."/>
            <person name="Livingstone M."/>
            <person name="Cerdeno-Tarraga A.-M."/>
            <person name="Harris B."/>
            <person name="Doggett J."/>
            <person name="Ormond D."/>
            <person name="Mungall K."/>
            <person name="Clarke K."/>
            <person name="Feltwell T."/>
            <person name="Hance Z."/>
            <person name="Sanders M."/>
            <person name="Quail M.A."/>
            <person name="Price C."/>
            <person name="Barrell B.G."/>
            <person name="Parkhill J."/>
            <person name="Longbottom D."/>
        </authorList>
    </citation>
    <scope>NUCLEOTIDE SEQUENCE [LARGE SCALE GENOMIC DNA]</scope>
    <source>
        <strain>DSM 27085 / S26/3</strain>
    </source>
</reference>
<sequence>MGNLIKELQEEQLRKEILTDFCVGDTIRVATKIVDGGKERTQTFQGTVMARKGGGAGEVISLHRVAYGEGMEKSFLLHSPKIVGIEVVKRGKVSRARLYYLKGKTGKAAKVKEYIGPRSAKK</sequence>
<comment type="function">
    <text evidence="1">This protein is located at the 30S-50S ribosomal subunit interface and may play a role in the structure and function of the aminoacyl-tRNA binding site.</text>
</comment>
<comment type="similarity">
    <text evidence="1">Belongs to the bacterial ribosomal protein bL19 family.</text>
</comment>
<keyword id="KW-0687">Ribonucleoprotein</keyword>
<keyword id="KW-0689">Ribosomal protein</keyword>
<feature type="chain" id="PRO_0000226838" description="Large ribosomal subunit protein bL19">
    <location>
        <begin position="1"/>
        <end position="122"/>
    </location>
</feature>